<name>RL27_BORBZ</name>
<feature type="chain" id="PRO_1000128698" description="Large ribosomal subunit protein bL27">
    <location>
        <begin position="1"/>
        <end position="81"/>
    </location>
</feature>
<feature type="region of interest" description="Disordered" evidence="2">
    <location>
        <begin position="1"/>
        <end position="20"/>
    </location>
</feature>
<feature type="compositionally biased region" description="Polar residues" evidence="2">
    <location>
        <begin position="1"/>
        <end position="11"/>
    </location>
</feature>
<protein>
    <recommendedName>
        <fullName evidence="1">Large ribosomal subunit protein bL27</fullName>
    </recommendedName>
    <alternativeName>
        <fullName evidence="3">50S ribosomal protein L27</fullName>
    </alternativeName>
</protein>
<evidence type="ECO:0000255" key="1">
    <source>
        <dbReference type="HAMAP-Rule" id="MF_00539"/>
    </source>
</evidence>
<evidence type="ECO:0000256" key="2">
    <source>
        <dbReference type="SAM" id="MobiDB-lite"/>
    </source>
</evidence>
<evidence type="ECO:0000305" key="3"/>
<keyword id="KW-0687">Ribonucleoprotein</keyword>
<keyword id="KW-0689">Ribosomal protein</keyword>
<accession>B7J0M6</accession>
<proteinExistence type="inferred from homology"/>
<comment type="similarity">
    <text evidence="1">Belongs to the bacterial ribosomal protein bL27 family.</text>
</comment>
<gene>
    <name evidence="1" type="primary">rpmA</name>
    <name type="ordered locus">BbuZS7_0809</name>
</gene>
<sequence length="81" mass="8748">MATSKSGGSSKNGRDSISKRLGVKRSGGQFVKAGEIIVRQRGTKFHKGKNVGLGRDYTIFALSSGKVEFKTLKGRKYVSIV</sequence>
<dbReference type="EMBL" id="CP001205">
    <property type="protein sequence ID" value="ACK75208.1"/>
    <property type="molecule type" value="Genomic_DNA"/>
</dbReference>
<dbReference type="RefSeq" id="WP_002656482.1">
    <property type="nucleotide sequence ID" value="NC_011728.1"/>
</dbReference>
<dbReference type="SMR" id="B7J0M6"/>
<dbReference type="GeneID" id="77265635"/>
<dbReference type="KEGG" id="bbz:BbuZS7_0809"/>
<dbReference type="HOGENOM" id="CLU_095424_4_1_12"/>
<dbReference type="Proteomes" id="UP000006901">
    <property type="component" value="Chromosome"/>
</dbReference>
<dbReference type="GO" id="GO:0022625">
    <property type="term" value="C:cytosolic large ribosomal subunit"/>
    <property type="evidence" value="ECO:0007669"/>
    <property type="project" value="TreeGrafter"/>
</dbReference>
<dbReference type="GO" id="GO:0003735">
    <property type="term" value="F:structural constituent of ribosome"/>
    <property type="evidence" value="ECO:0007669"/>
    <property type="project" value="InterPro"/>
</dbReference>
<dbReference type="GO" id="GO:0006412">
    <property type="term" value="P:translation"/>
    <property type="evidence" value="ECO:0007669"/>
    <property type="project" value="UniProtKB-UniRule"/>
</dbReference>
<dbReference type="FunFam" id="2.40.50.100:FF:000020">
    <property type="entry name" value="50S ribosomal protein L27"/>
    <property type="match status" value="1"/>
</dbReference>
<dbReference type="Gene3D" id="2.40.50.100">
    <property type="match status" value="1"/>
</dbReference>
<dbReference type="HAMAP" id="MF_00539">
    <property type="entry name" value="Ribosomal_bL27"/>
    <property type="match status" value="1"/>
</dbReference>
<dbReference type="InterPro" id="IPR001684">
    <property type="entry name" value="Ribosomal_bL27"/>
</dbReference>
<dbReference type="InterPro" id="IPR018261">
    <property type="entry name" value="Ribosomal_bL27_CS"/>
</dbReference>
<dbReference type="NCBIfam" id="TIGR00062">
    <property type="entry name" value="L27"/>
    <property type="match status" value="1"/>
</dbReference>
<dbReference type="PANTHER" id="PTHR15893:SF0">
    <property type="entry name" value="LARGE RIBOSOMAL SUBUNIT PROTEIN BL27M"/>
    <property type="match status" value="1"/>
</dbReference>
<dbReference type="PANTHER" id="PTHR15893">
    <property type="entry name" value="RIBOSOMAL PROTEIN L27"/>
    <property type="match status" value="1"/>
</dbReference>
<dbReference type="Pfam" id="PF01016">
    <property type="entry name" value="Ribosomal_L27"/>
    <property type="match status" value="1"/>
</dbReference>
<dbReference type="PRINTS" id="PR00063">
    <property type="entry name" value="RIBOSOMALL27"/>
</dbReference>
<dbReference type="SUPFAM" id="SSF110324">
    <property type="entry name" value="Ribosomal L27 protein-like"/>
    <property type="match status" value="1"/>
</dbReference>
<dbReference type="PROSITE" id="PS00831">
    <property type="entry name" value="RIBOSOMAL_L27"/>
    <property type="match status" value="1"/>
</dbReference>
<organism>
    <name type="scientific">Borreliella burgdorferi (strain ZS7)</name>
    <name type="common">Borrelia burgdorferi</name>
    <dbReference type="NCBI Taxonomy" id="445985"/>
    <lineage>
        <taxon>Bacteria</taxon>
        <taxon>Pseudomonadati</taxon>
        <taxon>Spirochaetota</taxon>
        <taxon>Spirochaetia</taxon>
        <taxon>Spirochaetales</taxon>
        <taxon>Borreliaceae</taxon>
        <taxon>Borreliella</taxon>
    </lineage>
</organism>
<reference key="1">
    <citation type="journal article" date="2011" name="J. Bacteriol.">
        <title>Whole-genome sequences of thirteen isolates of Borrelia burgdorferi.</title>
        <authorList>
            <person name="Schutzer S.E."/>
            <person name="Fraser-Liggett C.M."/>
            <person name="Casjens S.R."/>
            <person name="Qiu W.G."/>
            <person name="Dunn J.J."/>
            <person name="Mongodin E.F."/>
            <person name="Luft B.J."/>
        </authorList>
    </citation>
    <scope>NUCLEOTIDE SEQUENCE [LARGE SCALE GENOMIC DNA]</scope>
    <source>
        <strain>ZS7</strain>
    </source>
</reference>